<feature type="chain" id="PRO_0000436872" description="Myb family transcription factor EFM">
    <location>
        <begin position="1"/>
        <end position="432"/>
    </location>
</feature>
<feature type="domain" description="HTH myb-type" evidence="2">
    <location>
        <begin position="230"/>
        <end position="290"/>
    </location>
</feature>
<feature type="DNA-binding region" description="H-T-H motif" evidence="2">
    <location>
        <begin position="261"/>
        <end position="286"/>
    </location>
</feature>
<feature type="region of interest" description="Disordered" evidence="3">
    <location>
        <begin position="123"/>
        <end position="237"/>
    </location>
</feature>
<feature type="region of interest" description="Disordered" evidence="3">
    <location>
        <begin position="354"/>
        <end position="412"/>
    </location>
</feature>
<feature type="coiled-coil region" evidence="1">
    <location>
        <begin position="36"/>
        <end position="81"/>
    </location>
</feature>
<feature type="compositionally biased region" description="Polar residues" evidence="3">
    <location>
        <begin position="123"/>
        <end position="139"/>
    </location>
</feature>
<feature type="compositionally biased region" description="Polar residues" evidence="3">
    <location>
        <begin position="187"/>
        <end position="197"/>
    </location>
</feature>
<feature type="compositionally biased region" description="Low complexity" evidence="3">
    <location>
        <begin position="201"/>
        <end position="231"/>
    </location>
</feature>
<dbReference type="EMBL" id="AC006284">
    <property type="protein sequence ID" value="AAD17450.2"/>
    <property type="molecule type" value="Genomic_DNA"/>
</dbReference>
<dbReference type="EMBL" id="CP002685">
    <property type="protein sequence ID" value="AEC05707.1"/>
    <property type="molecule type" value="Genomic_DNA"/>
</dbReference>
<dbReference type="EMBL" id="AY060559">
    <property type="protein sequence ID" value="AAL31188.1"/>
    <property type="molecule type" value="mRNA"/>
</dbReference>
<dbReference type="EMBL" id="AY133630">
    <property type="protein sequence ID" value="AAM91460.1"/>
    <property type="molecule type" value="mRNA"/>
</dbReference>
<dbReference type="EMBL" id="AK221662">
    <property type="protein sequence ID" value="BAD95340.1"/>
    <property type="molecule type" value="mRNA"/>
</dbReference>
<dbReference type="PIR" id="B84449">
    <property type="entry name" value="B84449"/>
</dbReference>
<dbReference type="RefSeq" id="NP_027544.1">
    <property type="nucleotide sequence ID" value="NM_126400.3"/>
</dbReference>
<dbReference type="SMR" id="Q9ZQ85"/>
<dbReference type="FunCoup" id="Q9ZQ85">
    <property type="interactions" value="356"/>
</dbReference>
<dbReference type="IntAct" id="Q9ZQ85">
    <property type="interactions" value="8"/>
</dbReference>
<dbReference type="STRING" id="3702.Q9ZQ85"/>
<dbReference type="iPTMnet" id="Q9ZQ85"/>
<dbReference type="PaxDb" id="3702-AT2G03500.1"/>
<dbReference type="ProteomicsDB" id="247130"/>
<dbReference type="EnsemblPlants" id="AT2G03500.1">
    <property type="protein sequence ID" value="AT2G03500.1"/>
    <property type="gene ID" value="AT2G03500"/>
</dbReference>
<dbReference type="GeneID" id="814878"/>
<dbReference type="Gramene" id="AT2G03500.1">
    <property type="protein sequence ID" value="AT2G03500.1"/>
    <property type="gene ID" value="AT2G03500"/>
</dbReference>
<dbReference type="KEGG" id="ath:AT2G03500"/>
<dbReference type="Araport" id="AT2G03500"/>
<dbReference type="TAIR" id="AT2G03500">
    <property type="gene designation" value="EFM"/>
</dbReference>
<dbReference type="eggNOG" id="ENOG502QU6F">
    <property type="taxonomic scope" value="Eukaryota"/>
</dbReference>
<dbReference type="HOGENOM" id="CLU_036551_0_1_1"/>
<dbReference type="InParanoid" id="Q9ZQ85"/>
<dbReference type="OMA" id="HASTHYC"/>
<dbReference type="OrthoDB" id="1908613at2759"/>
<dbReference type="PhylomeDB" id="Q9ZQ85"/>
<dbReference type="PRO" id="PR:Q9ZQ85"/>
<dbReference type="Proteomes" id="UP000006548">
    <property type="component" value="Chromosome 2"/>
</dbReference>
<dbReference type="ExpressionAtlas" id="Q9ZQ85">
    <property type="expression patterns" value="baseline and differential"/>
</dbReference>
<dbReference type="GO" id="GO:0005634">
    <property type="term" value="C:nucleus"/>
    <property type="evidence" value="ECO:0000314"/>
    <property type="project" value="TAIR"/>
</dbReference>
<dbReference type="GO" id="GO:0003677">
    <property type="term" value="F:DNA binding"/>
    <property type="evidence" value="ECO:0007669"/>
    <property type="project" value="UniProtKB-KW"/>
</dbReference>
<dbReference type="GO" id="GO:0003700">
    <property type="term" value="F:DNA-binding transcription factor activity"/>
    <property type="evidence" value="ECO:0000250"/>
    <property type="project" value="TAIR"/>
</dbReference>
<dbReference type="GO" id="GO:0009908">
    <property type="term" value="P:flower development"/>
    <property type="evidence" value="ECO:0007669"/>
    <property type="project" value="UniProtKB-KW"/>
</dbReference>
<dbReference type="GO" id="GO:0009740">
    <property type="term" value="P:gibberellic acid mediated signaling pathway"/>
    <property type="evidence" value="ECO:0000270"/>
    <property type="project" value="TAIR"/>
</dbReference>
<dbReference type="GO" id="GO:0048579">
    <property type="term" value="P:negative regulation of long-day photoperiodism, flowering"/>
    <property type="evidence" value="ECO:0000315"/>
    <property type="project" value="TAIR"/>
</dbReference>
<dbReference type="GO" id="GO:0006355">
    <property type="term" value="P:regulation of DNA-templated transcription"/>
    <property type="evidence" value="ECO:0000304"/>
    <property type="project" value="TAIR"/>
</dbReference>
<dbReference type="GO" id="GO:0009266">
    <property type="term" value="P:response to temperature stimulus"/>
    <property type="evidence" value="ECO:0000270"/>
    <property type="project" value="TAIR"/>
</dbReference>
<dbReference type="FunFam" id="1.10.10.60:FF:000002">
    <property type="entry name" value="Myb family transcription factor"/>
    <property type="match status" value="1"/>
</dbReference>
<dbReference type="Gene3D" id="1.10.10.60">
    <property type="entry name" value="Homeodomain-like"/>
    <property type="match status" value="1"/>
</dbReference>
<dbReference type="InterPro" id="IPR009057">
    <property type="entry name" value="Homeodomain-like_sf"/>
</dbReference>
<dbReference type="InterPro" id="IPR044787">
    <property type="entry name" value="HRS1-like"/>
</dbReference>
<dbReference type="InterPro" id="IPR017930">
    <property type="entry name" value="Myb_dom"/>
</dbReference>
<dbReference type="InterPro" id="IPR006447">
    <property type="entry name" value="Myb_dom_plants"/>
</dbReference>
<dbReference type="InterPro" id="IPR001005">
    <property type="entry name" value="SANT/Myb"/>
</dbReference>
<dbReference type="NCBIfam" id="TIGR01557">
    <property type="entry name" value="myb_SHAQKYF"/>
    <property type="match status" value="1"/>
</dbReference>
<dbReference type="PANTHER" id="PTHR31003">
    <property type="entry name" value="MYB FAMILY TRANSCRIPTION FACTOR"/>
    <property type="match status" value="1"/>
</dbReference>
<dbReference type="PANTHER" id="PTHR31003:SF19">
    <property type="entry name" value="MYB FAMILY TRANSCRIPTION FACTOR EFM"/>
    <property type="match status" value="1"/>
</dbReference>
<dbReference type="Pfam" id="PF00249">
    <property type="entry name" value="Myb_DNA-binding"/>
    <property type="match status" value="1"/>
</dbReference>
<dbReference type="SUPFAM" id="SSF46689">
    <property type="entry name" value="Homeodomain-like"/>
    <property type="match status" value="1"/>
</dbReference>
<dbReference type="PROSITE" id="PS51294">
    <property type="entry name" value="HTH_MYB"/>
    <property type="match status" value="1"/>
</dbReference>
<name>EFM_ARATH</name>
<organism>
    <name type="scientific">Arabidopsis thaliana</name>
    <name type="common">Mouse-ear cress</name>
    <dbReference type="NCBI Taxonomy" id="3702"/>
    <lineage>
        <taxon>Eukaryota</taxon>
        <taxon>Viridiplantae</taxon>
        <taxon>Streptophyta</taxon>
        <taxon>Embryophyta</taxon>
        <taxon>Tracheophyta</taxon>
        <taxon>Spermatophyta</taxon>
        <taxon>Magnoliopsida</taxon>
        <taxon>eudicotyledons</taxon>
        <taxon>Gunneridae</taxon>
        <taxon>Pentapetalae</taxon>
        <taxon>rosids</taxon>
        <taxon>malvids</taxon>
        <taxon>Brassicales</taxon>
        <taxon>Brassicaceae</taxon>
        <taxon>Camelineae</taxon>
        <taxon>Arabidopsis</taxon>
    </lineage>
</organism>
<reference key="1">
    <citation type="journal article" date="1999" name="Nature">
        <title>Sequence and analysis of chromosome 2 of the plant Arabidopsis thaliana.</title>
        <authorList>
            <person name="Lin X."/>
            <person name="Kaul S."/>
            <person name="Rounsley S.D."/>
            <person name="Shea T.P."/>
            <person name="Benito M.-I."/>
            <person name="Town C.D."/>
            <person name="Fujii C.Y."/>
            <person name="Mason T.M."/>
            <person name="Bowman C.L."/>
            <person name="Barnstead M.E."/>
            <person name="Feldblyum T.V."/>
            <person name="Buell C.R."/>
            <person name="Ketchum K.A."/>
            <person name="Lee J.J."/>
            <person name="Ronning C.M."/>
            <person name="Koo H.L."/>
            <person name="Moffat K.S."/>
            <person name="Cronin L.A."/>
            <person name="Shen M."/>
            <person name="Pai G."/>
            <person name="Van Aken S."/>
            <person name="Umayam L."/>
            <person name="Tallon L.J."/>
            <person name="Gill J.E."/>
            <person name="Adams M.D."/>
            <person name="Carrera A.J."/>
            <person name="Creasy T.H."/>
            <person name="Goodman H.M."/>
            <person name="Somerville C.R."/>
            <person name="Copenhaver G.P."/>
            <person name="Preuss D."/>
            <person name="Nierman W.C."/>
            <person name="White O."/>
            <person name="Eisen J.A."/>
            <person name="Salzberg S.L."/>
            <person name="Fraser C.M."/>
            <person name="Venter J.C."/>
        </authorList>
    </citation>
    <scope>NUCLEOTIDE SEQUENCE [LARGE SCALE GENOMIC DNA]</scope>
    <source>
        <strain>cv. Columbia</strain>
    </source>
</reference>
<reference key="2">
    <citation type="journal article" date="2017" name="Plant J.">
        <title>Araport11: a complete reannotation of the Arabidopsis thaliana reference genome.</title>
        <authorList>
            <person name="Cheng C.Y."/>
            <person name="Krishnakumar V."/>
            <person name="Chan A.P."/>
            <person name="Thibaud-Nissen F."/>
            <person name="Schobel S."/>
            <person name="Town C.D."/>
        </authorList>
    </citation>
    <scope>GENOME REANNOTATION</scope>
    <source>
        <strain>cv. Columbia</strain>
    </source>
</reference>
<reference key="3">
    <citation type="journal article" date="2003" name="Science">
        <title>Empirical analysis of transcriptional activity in the Arabidopsis genome.</title>
        <authorList>
            <person name="Yamada K."/>
            <person name="Lim J."/>
            <person name="Dale J.M."/>
            <person name="Chen H."/>
            <person name="Shinn P."/>
            <person name="Palm C.J."/>
            <person name="Southwick A.M."/>
            <person name="Wu H.C."/>
            <person name="Kim C.J."/>
            <person name="Nguyen M."/>
            <person name="Pham P.K."/>
            <person name="Cheuk R.F."/>
            <person name="Karlin-Newmann G."/>
            <person name="Liu S.X."/>
            <person name="Lam B."/>
            <person name="Sakano H."/>
            <person name="Wu T."/>
            <person name="Yu G."/>
            <person name="Miranda M."/>
            <person name="Quach H.L."/>
            <person name="Tripp M."/>
            <person name="Chang C.H."/>
            <person name="Lee J.M."/>
            <person name="Toriumi M.J."/>
            <person name="Chan M.M."/>
            <person name="Tang C.C."/>
            <person name="Onodera C.S."/>
            <person name="Deng J.M."/>
            <person name="Akiyama K."/>
            <person name="Ansari Y."/>
            <person name="Arakawa T."/>
            <person name="Banh J."/>
            <person name="Banno F."/>
            <person name="Bowser L."/>
            <person name="Brooks S.Y."/>
            <person name="Carninci P."/>
            <person name="Chao Q."/>
            <person name="Choy N."/>
            <person name="Enju A."/>
            <person name="Goldsmith A.D."/>
            <person name="Gurjal M."/>
            <person name="Hansen N.F."/>
            <person name="Hayashizaki Y."/>
            <person name="Johnson-Hopson C."/>
            <person name="Hsuan V.W."/>
            <person name="Iida K."/>
            <person name="Karnes M."/>
            <person name="Khan S."/>
            <person name="Koesema E."/>
            <person name="Ishida J."/>
            <person name="Jiang P.X."/>
            <person name="Jones T."/>
            <person name="Kawai J."/>
            <person name="Kamiya A."/>
            <person name="Meyers C."/>
            <person name="Nakajima M."/>
            <person name="Narusaka M."/>
            <person name="Seki M."/>
            <person name="Sakurai T."/>
            <person name="Satou M."/>
            <person name="Tamse R."/>
            <person name="Vaysberg M."/>
            <person name="Wallender E.K."/>
            <person name="Wong C."/>
            <person name="Yamamura Y."/>
            <person name="Yuan S."/>
            <person name="Shinozaki K."/>
            <person name="Davis R.W."/>
            <person name="Theologis A."/>
            <person name="Ecker J.R."/>
        </authorList>
    </citation>
    <scope>NUCLEOTIDE SEQUENCE [LARGE SCALE MRNA]</scope>
    <source>
        <strain>cv. Columbia</strain>
    </source>
</reference>
<reference key="4">
    <citation type="submission" date="2005-03" db="EMBL/GenBank/DDBJ databases">
        <title>Large-scale analysis of RIKEN Arabidopsis full-length (RAFL) cDNAs.</title>
        <authorList>
            <person name="Totoki Y."/>
            <person name="Seki M."/>
            <person name="Ishida J."/>
            <person name="Nakajima M."/>
            <person name="Enju A."/>
            <person name="Kamiya A."/>
            <person name="Narusaka M."/>
            <person name="Shin-i T."/>
            <person name="Nakagawa M."/>
            <person name="Sakamoto N."/>
            <person name="Oishi K."/>
            <person name="Kohara Y."/>
            <person name="Kobayashi M."/>
            <person name="Toyoda A."/>
            <person name="Sakaki Y."/>
            <person name="Sakurai T."/>
            <person name="Iida K."/>
            <person name="Akiyama K."/>
            <person name="Satou M."/>
            <person name="Toyoda T."/>
            <person name="Konagaya A."/>
            <person name="Carninci P."/>
            <person name="Kawai J."/>
            <person name="Hayashizaki Y."/>
            <person name="Shinozaki K."/>
        </authorList>
    </citation>
    <scope>NUCLEOTIDE SEQUENCE [LARGE SCALE MRNA]</scope>
    <source>
        <strain>cv. Columbia</strain>
    </source>
</reference>
<reference key="5">
    <citation type="journal article" date="2014" name="Dev. Cell">
        <title>A MYB-domain protein EFM mediates flowering responses to environmental cues in Arabidopsis.</title>
        <authorList>
            <person name="Yan Y."/>
            <person name="Shen L."/>
            <person name="Chen Y."/>
            <person name="Bao S."/>
            <person name="Thong Z."/>
            <person name="Yu H."/>
        </authorList>
    </citation>
    <scope>FUNCTION</scope>
    <scope>DISRUPTION PHENOTYPE</scope>
    <scope>TISSUE SPECIFICITY</scope>
    <scope>SUBCELLULAR LOCATION</scope>
    <scope>INDUCTION</scope>
    <scope>DEVELOPMENTAL STAGE</scope>
    <scope>INTERACTION WITH JMJ30</scope>
    <scope>LACK OF INTERACTION WITH SVP; FLC AND CO</scope>
</reference>
<sequence>MASSSELSLDCKPQSYSMLLKSFGDNFQSDPTTHKLEDLLSRLEQERLKIDAFKRELPLCMQLLNNAVEVYKQQLEAYRANSNNNNQSVGTRPVLEEFIPLRNQPEKTNNKGSNWMTTAQLWSQSETKPKNIDSTTDQSLPKDEINSSPKLGHFDAKQRNGSGAFLPFSKEQSLPELALSTEVKRVSPTNEHTNGQDGNDESMINNDNNYNNNNNNNSNSNGVSSTTSQSNRKARRCWSPDLHRRFVQALQMLGGSQVATPKQIRELMKVDGLTNDEVKSHLQKYRLHTRRPSPSPQTSGGPGPHLVVLGGIWVPPEYTSAHGGTPTLYHHQVHHHHTNTAGPPPPHFCSSQEFYTTPPPPQPLHHHHFQTFNGSSGGTASTDSTHHQVTDSPTVEGKSPESGGGERKGLAALREECEDHSNINGSEITLKF</sequence>
<protein>
    <recommendedName>
        <fullName evidence="5">Myb family transcription factor EFM</fullName>
    </recommendedName>
    <alternativeName>
        <fullName evidence="6">MYB-domain transcription factor HHO4</fullName>
    </alternativeName>
    <alternativeName>
        <fullName evidence="5">Protein EARLY FLOWERING MYB</fullName>
    </alternativeName>
    <alternativeName>
        <fullName evidence="6">Protein HRS1 HOMOLOG 4</fullName>
    </alternativeName>
</protein>
<proteinExistence type="evidence at protein level"/>
<keyword id="KW-0175">Coiled coil</keyword>
<keyword id="KW-0238">DNA-binding</keyword>
<keyword id="KW-0287">Flowering</keyword>
<keyword id="KW-0539">Nucleus</keyword>
<keyword id="KW-1185">Reference proteome</keyword>
<keyword id="KW-0804">Transcription</keyword>
<keyword id="KW-0805">Transcription regulation</keyword>
<accession>Q9ZQ85</accession>
<accession>Q8W4S3</accession>
<evidence type="ECO:0000255" key="1"/>
<evidence type="ECO:0000255" key="2">
    <source>
        <dbReference type="PROSITE-ProRule" id="PRU00625"/>
    </source>
</evidence>
<evidence type="ECO:0000256" key="3">
    <source>
        <dbReference type="SAM" id="MobiDB-lite"/>
    </source>
</evidence>
<evidence type="ECO:0000269" key="4">
    <source>
    </source>
</evidence>
<evidence type="ECO:0000303" key="5">
    <source>
    </source>
</evidence>
<evidence type="ECO:0000305" key="6"/>
<evidence type="ECO:0000312" key="7">
    <source>
        <dbReference type="Araport" id="AT2G03500"/>
    </source>
</evidence>
<evidence type="ECO:0000312" key="8">
    <source>
        <dbReference type="EMBL" id="AAL31188.1"/>
    </source>
</evidence>
<gene>
    <name evidence="5" type="primary">EFM</name>
    <name evidence="6" type="synonym">HHO4</name>
    <name evidence="7" type="ordered locus">At2g03500</name>
    <name evidence="8" type="ORF">T4M8.7</name>
</gene>
<comment type="function">
    <text evidence="4">Transcription factor acting as a flowering repressor, directly repressing FT expression in a dosage-dependent manner in the leaf vasculature.</text>
</comment>
<comment type="subunit">
    <text evidence="4">Interacts with JMJ30, but not with SVP, FLC or CO.</text>
</comment>
<comment type="interaction">
    <interactant intactId="EBI-4449948">
        <id>Q9ZQ85</id>
    </interactant>
    <interactant intactId="EBI-4424563">
        <id>Q93Z00</id>
        <label>TCP14</label>
    </interactant>
    <organismsDiffer>false</organismsDiffer>
    <experiments>3</experiments>
</comment>
<comment type="subcellular location">
    <subcellularLocation>
        <location evidence="4">Nucleus</location>
    </subcellularLocation>
</comment>
<comment type="tissue specificity">
    <text evidence="4">Specifically expressed in vascular tissues of cotyledons, rosette leaves and cauline leaves. Not detected in the vegetative shoot apical meristem.</text>
</comment>
<comment type="developmental stage">
    <text evidence="4">Expressed 3 days after germination, with a gradual decrease before the floral transition and remains at low levels afterward.</text>
</comment>
<comment type="induction">
    <text evidence="4">Up-regulated by SVP. Down-regulated by high temperature and gibberellic acid treatment. Not regulated by photoperiod, circadian rhythm under long days or vernalization.</text>
</comment>
<comment type="disruption phenotype">
    <text evidence="4">Early flowering under both long-day and short-day conditions.</text>
</comment>